<keyword id="KW-0963">Cytoplasm</keyword>
<keyword id="KW-0378">Hydrolase</keyword>
<keyword id="KW-0539">Nucleus</keyword>
<keyword id="KW-0645">Protease</keyword>
<keyword id="KW-1185">Reference proteome</keyword>
<keyword id="KW-0677">Repeat</keyword>
<keyword id="KW-0788">Thiol protease</keyword>
<name>CAN10_RAT</name>
<feature type="chain" id="PRO_0000207728" description="Calpain-10">
    <location>
        <begin position="1"/>
        <end position="666"/>
    </location>
</feature>
<feature type="domain" description="Calpain catalytic" evidence="2">
    <location>
        <begin position="13"/>
        <end position="321"/>
    </location>
</feature>
<feature type="region of interest" description="Domain III 1">
    <location>
        <begin position="322"/>
        <end position="488"/>
    </location>
</feature>
<feature type="region of interest" description="Domain III 2">
    <location>
        <begin position="507"/>
        <end position="648"/>
    </location>
</feature>
<feature type="active site" evidence="1">
    <location>
        <position position="73"/>
    </location>
</feature>
<feature type="active site" evidence="1">
    <location>
        <position position="238"/>
    </location>
</feature>
<feature type="active site" evidence="1">
    <location>
        <position position="263"/>
    </location>
</feature>
<protein>
    <recommendedName>
        <fullName>Calpain-10</fullName>
        <ecNumber>3.4.22.-</ecNumber>
    </recommendedName>
    <alternativeName>
        <fullName>Calcium-activated neutral proteinase 10</fullName>
        <shortName>CANP 10</shortName>
    </alternativeName>
</protein>
<accession>Q9ES66</accession>
<sequence length="666" mass="74527">MRAVRAETRARELFRDAAFPASDSSLFYNLSTPLAQFREDITWRRPQDICATPQLFPDNPWEGQVKQGLLGDCWFLCACAALQKSRHLLDQVFPPGQPGWSDQEYQGFFTCRIWQFGHWEEVTIDDRLPCLAGRLCFSRCQREDVFWLPLLEKAYAKVHGSYEHLWAGQVADALVDLTGSLAERWSLKDIRKASGQQDRPSGGEHRACQQLLRLKDQCLLSCSVLSPRAGARELGEFHAFIISDLQELRSQTGQGILLLRIHNPWGRRCWQGLWREGGEGWNQVEPAKESELLAQLQEGEFWVEEEEFLREFDEVTIGYPVTEAGHLQSLYTEKVLCHTRALPGAWVTGQSAGGCRNNSCFPCNPKFWLRLLEPSEVCVAVLQRPRRRLVGQTRALAGASPAPVNLPGKDYQAVGLHIWKVEKRKISLPRVLSAPPVAGTACHAYDREIHLRCELSPGYYLAVPSTFLKDVPGQFLLRVFSTGKISLSAVRLATKGASPGAALPAGEWETVQLQGSWRAGQTAGGSRNFASYPCNPCLPFSVPEGAGPRYIRITLQQHCRLSDSQLHPIGFHVFQVPADGEKQDACSLLLQEPLLSCVPHCYAQEVSRLCLLSAGNYRIVPSTYLPDTEGTFTVTIATRIDRQSIHSQEMLGQLLQEVSFMAVMKA</sequence>
<proteinExistence type="evidence at transcript level"/>
<dbReference type="EC" id="3.4.22.-"/>
<dbReference type="EMBL" id="AF227909">
    <property type="protein sequence ID" value="AAG09736.3"/>
    <property type="molecule type" value="mRNA"/>
</dbReference>
<dbReference type="RefSeq" id="NP_113861.1">
    <property type="nucleotide sequence ID" value="NM_031673.2"/>
</dbReference>
<dbReference type="SMR" id="Q9ES66"/>
<dbReference type="FunCoup" id="Q9ES66">
    <property type="interactions" value="561"/>
</dbReference>
<dbReference type="STRING" id="10116.ENSRNOP00000067567"/>
<dbReference type="ChEMBL" id="CHEMBL6130"/>
<dbReference type="MEROPS" id="C02.018"/>
<dbReference type="PhosphoSitePlus" id="Q9ES66"/>
<dbReference type="PaxDb" id="10116-ENSRNOP00000067567"/>
<dbReference type="GeneID" id="63834"/>
<dbReference type="KEGG" id="rno:63834"/>
<dbReference type="AGR" id="RGD:69354"/>
<dbReference type="CTD" id="11132"/>
<dbReference type="RGD" id="69354">
    <property type="gene designation" value="Capn10"/>
</dbReference>
<dbReference type="eggNOG" id="KOG0045">
    <property type="taxonomic scope" value="Eukaryota"/>
</dbReference>
<dbReference type="InParanoid" id="Q9ES66"/>
<dbReference type="OrthoDB" id="14514at9989"/>
<dbReference type="PhylomeDB" id="Q9ES66"/>
<dbReference type="BRENDA" id="3.4.22.B30">
    <property type="organism ID" value="5301"/>
</dbReference>
<dbReference type="Reactome" id="R-RNO-1474228">
    <property type="pathway name" value="Degradation of the extracellular matrix"/>
</dbReference>
<dbReference type="PRO" id="PR:Q9ES66"/>
<dbReference type="Proteomes" id="UP000002494">
    <property type="component" value="Unplaced"/>
</dbReference>
<dbReference type="GO" id="GO:0005737">
    <property type="term" value="C:cytoplasm"/>
    <property type="evidence" value="ECO:0000318"/>
    <property type="project" value="GO_Central"/>
</dbReference>
<dbReference type="GO" id="GO:0005856">
    <property type="term" value="C:cytoskeleton"/>
    <property type="evidence" value="ECO:0000314"/>
    <property type="project" value="RGD"/>
</dbReference>
<dbReference type="GO" id="GO:0005829">
    <property type="term" value="C:cytosol"/>
    <property type="evidence" value="ECO:0000314"/>
    <property type="project" value="BHF-UCL"/>
</dbReference>
<dbReference type="GO" id="GO:0016020">
    <property type="term" value="C:membrane"/>
    <property type="evidence" value="ECO:0000314"/>
    <property type="project" value="RGD"/>
</dbReference>
<dbReference type="GO" id="GO:0005743">
    <property type="term" value="C:mitochondrial inner membrane"/>
    <property type="evidence" value="ECO:0000314"/>
    <property type="project" value="RGD"/>
</dbReference>
<dbReference type="GO" id="GO:0005759">
    <property type="term" value="C:mitochondrial matrix"/>
    <property type="evidence" value="ECO:0000314"/>
    <property type="project" value="RGD"/>
</dbReference>
<dbReference type="GO" id="GO:0005741">
    <property type="term" value="C:mitochondrial outer membrane"/>
    <property type="evidence" value="ECO:0000314"/>
    <property type="project" value="RGD"/>
</dbReference>
<dbReference type="GO" id="GO:0005739">
    <property type="term" value="C:mitochondrion"/>
    <property type="evidence" value="ECO:0000266"/>
    <property type="project" value="RGD"/>
</dbReference>
<dbReference type="GO" id="GO:0005634">
    <property type="term" value="C:nucleus"/>
    <property type="evidence" value="ECO:0007669"/>
    <property type="project" value="UniProtKB-SubCell"/>
</dbReference>
<dbReference type="GO" id="GO:0005886">
    <property type="term" value="C:plasma membrane"/>
    <property type="evidence" value="ECO:0000314"/>
    <property type="project" value="BHF-UCL"/>
</dbReference>
<dbReference type="GO" id="GO:0004198">
    <property type="term" value="F:calcium-dependent cysteine-type endopeptidase activity"/>
    <property type="evidence" value="ECO:0000314"/>
    <property type="project" value="RGD"/>
</dbReference>
<dbReference type="GO" id="GO:0008092">
    <property type="term" value="F:cytoskeletal protein binding"/>
    <property type="evidence" value="ECO:0000314"/>
    <property type="project" value="BHF-UCL"/>
</dbReference>
<dbReference type="GO" id="GO:0000149">
    <property type="term" value="F:SNARE binding"/>
    <property type="evidence" value="ECO:0000314"/>
    <property type="project" value="BHF-UCL"/>
</dbReference>
<dbReference type="GO" id="GO:0000422">
    <property type="term" value="P:autophagy of mitochondrion"/>
    <property type="evidence" value="ECO:0000315"/>
    <property type="project" value="RGD"/>
</dbReference>
<dbReference type="GO" id="GO:0032869">
    <property type="term" value="P:cellular response to insulin stimulus"/>
    <property type="evidence" value="ECO:0000266"/>
    <property type="project" value="RGD"/>
</dbReference>
<dbReference type="GO" id="GO:0007005">
    <property type="term" value="P:mitochondrion organization"/>
    <property type="evidence" value="ECO:0000315"/>
    <property type="project" value="RGD"/>
</dbReference>
<dbReference type="GO" id="GO:0043065">
    <property type="term" value="P:positive regulation of apoptotic process"/>
    <property type="evidence" value="ECO:0000315"/>
    <property type="project" value="RGD"/>
</dbReference>
<dbReference type="GO" id="GO:0046326">
    <property type="term" value="P:positive regulation of D-glucose import"/>
    <property type="evidence" value="ECO:0000266"/>
    <property type="project" value="RGD"/>
</dbReference>
<dbReference type="GO" id="GO:0032024">
    <property type="term" value="P:positive regulation of insulin secretion"/>
    <property type="evidence" value="ECO:0000266"/>
    <property type="project" value="RGD"/>
</dbReference>
<dbReference type="GO" id="GO:0032388">
    <property type="term" value="P:positive regulation of intracellular transport"/>
    <property type="evidence" value="ECO:0000266"/>
    <property type="project" value="RGD"/>
</dbReference>
<dbReference type="GO" id="GO:2000676">
    <property type="term" value="P:positive regulation of type B pancreatic cell apoptotic process"/>
    <property type="evidence" value="ECO:0000266"/>
    <property type="project" value="RGD"/>
</dbReference>
<dbReference type="GO" id="GO:0030163">
    <property type="term" value="P:protein catabolic process"/>
    <property type="evidence" value="ECO:0000314"/>
    <property type="project" value="RGD"/>
</dbReference>
<dbReference type="GO" id="GO:0006508">
    <property type="term" value="P:proteolysis"/>
    <property type="evidence" value="ECO:0000266"/>
    <property type="project" value="RGD"/>
</dbReference>
<dbReference type="GO" id="GO:0032956">
    <property type="term" value="P:regulation of actin cytoskeleton organization"/>
    <property type="evidence" value="ECO:0000266"/>
    <property type="project" value="RGD"/>
</dbReference>
<dbReference type="GO" id="GO:0009749">
    <property type="term" value="P:response to glucose"/>
    <property type="evidence" value="ECO:0000270"/>
    <property type="project" value="RGD"/>
</dbReference>
<dbReference type="GO" id="GO:0031667">
    <property type="term" value="P:response to nutrient levels"/>
    <property type="evidence" value="ECO:0000314"/>
    <property type="project" value="RGD"/>
</dbReference>
<dbReference type="GO" id="GO:0097050">
    <property type="term" value="P:type B pancreatic cell apoptotic process"/>
    <property type="evidence" value="ECO:0000266"/>
    <property type="project" value="RGD"/>
</dbReference>
<dbReference type="CDD" id="cd00214">
    <property type="entry name" value="Calpain_III"/>
    <property type="match status" value="2"/>
</dbReference>
<dbReference type="CDD" id="cd00044">
    <property type="entry name" value="CysPc"/>
    <property type="match status" value="1"/>
</dbReference>
<dbReference type="FunFam" id="2.60.120.380:FF:000006">
    <property type="entry name" value="Calpain 10"/>
    <property type="match status" value="1"/>
</dbReference>
<dbReference type="FunFam" id="2.60.120.380:FF:000010">
    <property type="entry name" value="Calpain 10"/>
    <property type="match status" value="1"/>
</dbReference>
<dbReference type="FunFam" id="3.90.70.10:FF:000073">
    <property type="entry name" value="Calpain 10"/>
    <property type="match status" value="1"/>
</dbReference>
<dbReference type="Gene3D" id="2.60.120.380">
    <property type="match status" value="2"/>
</dbReference>
<dbReference type="Gene3D" id="3.90.70.10">
    <property type="entry name" value="Cysteine proteinases"/>
    <property type="match status" value="1"/>
</dbReference>
<dbReference type="InterPro" id="IPR033883">
    <property type="entry name" value="C2_III"/>
</dbReference>
<dbReference type="InterPro" id="IPR022684">
    <property type="entry name" value="Calpain_cysteine_protease"/>
</dbReference>
<dbReference type="InterPro" id="IPR022682">
    <property type="entry name" value="Calpain_domain_III"/>
</dbReference>
<dbReference type="InterPro" id="IPR022683">
    <property type="entry name" value="Calpain_III"/>
</dbReference>
<dbReference type="InterPro" id="IPR036213">
    <property type="entry name" value="Calpain_III_sf"/>
</dbReference>
<dbReference type="InterPro" id="IPR038765">
    <property type="entry name" value="Papain-like_cys_pep_sf"/>
</dbReference>
<dbReference type="InterPro" id="IPR000169">
    <property type="entry name" value="Pept_cys_AS"/>
</dbReference>
<dbReference type="InterPro" id="IPR001300">
    <property type="entry name" value="Peptidase_C2_calpain_cat"/>
</dbReference>
<dbReference type="PANTHER" id="PTHR10183">
    <property type="entry name" value="CALPAIN"/>
    <property type="match status" value="1"/>
</dbReference>
<dbReference type="PANTHER" id="PTHR10183:SF30">
    <property type="entry name" value="CALPAIN-10"/>
    <property type="match status" value="1"/>
</dbReference>
<dbReference type="Pfam" id="PF01067">
    <property type="entry name" value="Calpain_III"/>
    <property type="match status" value="2"/>
</dbReference>
<dbReference type="Pfam" id="PF00648">
    <property type="entry name" value="Peptidase_C2"/>
    <property type="match status" value="1"/>
</dbReference>
<dbReference type="PRINTS" id="PR00704">
    <property type="entry name" value="CALPAIN"/>
</dbReference>
<dbReference type="SMART" id="SM00720">
    <property type="entry name" value="calpain_III"/>
    <property type="match status" value="2"/>
</dbReference>
<dbReference type="SMART" id="SM00230">
    <property type="entry name" value="CysPc"/>
    <property type="match status" value="1"/>
</dbReference>
<dbReference type="SUPFAM" id="SSF49758">
    <property type="entry name" value="Calpain large subunit, middle domain (domain III)"/>
    <property type="match status" value="2"/>
</dbReference>
<dbReference type="SUPFAM" id="SSF54001">
    <property type="entry name" value="Cysteine proteinases"/>
    <property type="match status" value="1"/>
</dbReference>
<dbReference type="PROSITE" id="PS50203">
    <property type="entry name" value="CALPAIN_CAT"/>
    <property type="match status" value="1"/>
</dbReference>
<dbReference type="PROSITE" id="PS00139">
    <property type="entry name" value="THIOL_PROTEASE_CYS"/>
    <property type="match status" value="1"/>
</dbReference>
<evidence type="ECO:0000250" key="1"/>
<evidence type="ECO:0000255" key="2">
    <source>
        <dbReference type="PROSITE-ProRule" id="PRU00239"/>
    </source>
</evidence>
<evidence type="ECO:0000269" key="3">
    <source>
    </source>
</evidence>
<evidence type="ECO:0000305" key="4"/>
<comment type="function">
    <text evidence="1">Calcium-regulated non-lysosomal thiol-protease which catalyzes limited proteolysis of substrates involved in cytoskeletal remodeling and signal transduction. May play a role in insulin-stimulated glucose uptake (By similarity).</text>
</comment>
<comment type="subcellular location">
    <subcellularLocation>
        <location>Cytoplasm</location>
    </subcellularLocation>
    <subcellularLocation>
        <location>Nucleus</location>
    </subcellularLocation>
</comment>
<comment type="tissue specificity">
    <text evidence="3">Ubiquitous.</text>
</comment>
<comment type="similarity">
    <text evidence="4">Belongs to the peptidase C2 family.</text>
</comment>
<gene>
    <name type="primary">Capn10</name>
</gene>
<reference key="1">
    <citation type="journal article" date="2001" name="J. Biol. Chem.">
        <title>Characterization and expression of calpain 10. A novel ubiquitous calpain with nuclear localization.</title>
        <authorList>
            <person name="Ma H."/>
            <person name="Fukiage C."/>
            <person name="Kim Y.H."/>
            <person name="Duncan M.K."/>
            <person name="Reed N.A."/>
            <person name="Shih M."/>
            <person name="Azuma M."/>
            <person name="Shearer T.R."/>
        </authorList>
    </citation>
    <scope>NUCLEOTIDE SEQUENCE [MRNA]</scope>
    <scope>TISSUE SPECIFICITY</scope>
    <source>
        <strain>Sprague-Dawley</strain>
    </source>
</reference>
<organism>
    <name type="scientific">Rattus norvegicus</name>
    <name type="common">Rat</name>
    <dbReference type="NCBI Taxonomy" id="10116"/>
    <lineage>
        <taxon>Eukaryota</taxon>
        <taxon>Metazoa</taxon>
        <taxon>Chordata</taxon>
        <taxon>Craniata</taxon>
        <taxon>Vertebrata</taxon>
        <taxon>Euteleostomi</taxon>
        <taxon>Mammalia</taxon>
        <taxon>Eutheria</taxon>
        <taxon>Euarchontoglires</taxon>
        <taxon>Glires</taxon>
        <taxon>Rodentia</taxon>
        <taxon>Myomorpha</taxon>
        <taxon>Muroidea</taxon>
        <taxon>Muridae</taxon>
        <taxon>Murinae</taxon>
        <taxon>Rattus</taxon>
    </lineage>
</organism>